<reference key="1">
    <citation type="journal article" date="2001" name="Science">
        <title>Mechanisms of evolution in Rickettsia conorii and R. prowazekii.</title>
        <authorList>
            <person name="Ogata H."/>
            <person name="Audic S."/>
            <person name="Renesto-Audiffren P."/>
            <person name="Fournier P.-E."/>
            <person name="Barbe V."/>
            <person name="Samson D."/>
            <person name="Roux V."/>
            <person name="Cossart P."/>
            <person name="Weissenbach J."/>
            <person name="Claverie J.-M."/>
            <person name="Raoult D."/>
        </authorList>
    </citation>
    <scope>NUCLEOTIDE SEQUENCE [LARGE SCALE GENOMIC DNA]</scope>
    <source>
        <strain>ATCC VR-613 / Malish 7</strain>
    </source>
</reference>
<feature type="chain" id="PRO_0000272622" description="Probable ABC transporter permease protein RC0129">
    <location>
        <begin position="1"/>
        <end position="259"/>
    </location>
</feature>
<feature type="transmembrane region" description="Helical" evidence="2">
    <location>
        <begin position="13"/>
        <end position="35"/>
    </location>
</feature>
<feature type="transmembrane region" description="Helical" evidence="2">
    <location>
        <begin position="49"/>
        <end position="69"/>
    </location>
</feature>
<feature type="transmembrane region" description="Helical" evidence="2">
    <location>
        <begin position="148"/>
        <end position="168"/>
    </location>
</feature>
<feature type="transmembrane region" description="Helical" evidence="2">
    <location>
        <begin position="195"/>
        <end position="215"/>
    </location>
</feature>
<feature type="transmembrane region" description="Helical" evidence="2">
    <location>
        <begin position="237"/>
        <end position="257"/>
    </location>
</feature>
<comment type="function">
    <text evidence="1">Could be part of an ABC transporter complex.</text>
</comment>
<comment type="subcellular location">
    <subcellularLocation>
        <location evidence="1">Cell inner membrane</location>
        <topology evidence="1">Multi-pass membrane protein</topology>
    </subcellularLocation>
</comment>
<comment type="similarity">
    <text evidence="3">Belongs to the MlaE permease family.</text>
</comment>
<sequence length="259" mass="27685">MLFNIANSVGKRTVKFAQSVGSFSLFSFAAVSSIIRPPLYLSLIIRQLLFIGFHSLPVVAMTTFFSGAVLALQSYIGFSRFSAESSIATVVVLSLTRELGPVLAGLMVAGRVGASIAAEIATMRVTEQIDALYTLSTDPIKYLVFPRVITAIITMPCLVLIGDIIGVMGGYLVGVYKLDFNSAAYLTSTFQYLEPIDVISGLVKAGVFGFIISIISCYSGYYSGKGAKGVGRATTSAVVNSSILILISNYLITELFFKV</sequence>
<keyword id="KW-0997">Cell inner membrane</keyword>
<keyword id="KW-1003">Cell membrane</keyword>
<keyword id="KW-0472">Membrane</keyword>
<keyword id="KW-0812">Transmembrane</keyword>
<keyword id="KW-1133">Transmembrane helix</keyword>
<keyword id="KW-0813">Transport</keyword>
<name>Y129_RICCN</name>
<proteinExistence type="inferred from homology"/>
<dbReference type="EMBL" id="AE006914">
    <property type="protein sequence ID" value="AAL02667.1"/>
    <property type="molecule type" value="Genomic_DNA"/>
</dbReference>
<dbReference type="PIR" id="A97716">
    <property type="entry name" value="A97716"/>
</dbReference>
<dbReference type="RefSeq" id="WP_004996740.1">
    <property type="nucleotide sequence ID" value="NC_003103.1"/>
</dbReference>
<dbReference type="SMR" id="Q92JD8"/>
<dbReference type="KEGG" id="rco:RC0129"/>
<dbReference type="HOGENOM" id="CLU_045686_1_1_5"/>
<dbReference type="Proteomes" id="UP000000816">
    <property type="component" value="Chromosome"/>
</dbReference>
<dbReference type="GO" id="GO:0043190">
    <property type="term" value="C:ATP-binding cassette (ABC) transporter complex"/>
    <property type="evidence" value="ECO:0007669"/>
    <property type="project" value="InterPro"/>
</dbReference>
<dbReference type="GO" id="GO:0005548">
    <property type="term" value="F:phospholipid transporter activity"/>
    <property type="evidence" value="ECO:0007669"/>
    <property type="project" value="TreeGrafter"/>
</dbReference>
<dbReference type="InterPro" id="IPR003453">
    <property type="entry name" value="ABC_MlaE_roteobac"/>
</dbReference>
<dbReference type="InterPro" id="IPR030802">
    <property type="entry name" value="Permease_MalE"/>
</dbReference>
<dbReference type="NCBIfam" id="TIGR00056">
    <property type="entry name" value="MlaE family lipid ABC transporter permease subunit"/>
    <property type="match status" value="1"/>
</dbReference>
<dbReference type="PANTHER" id="PTHR30188">
    <property type="entry name" value="ABC TRANSPORTER PERMEASE PROTEIN-RELATED"/>
    <property type="match status" value="1"/>
</dbReference>
<dbReference type="PANTHER" id="PTHR30188:SF4">
    <property type="entry name" value="PROTEIN TRIGALACTOSYLDIACYLGLYCEROL 1, CHLOROPLASTIC"/>
    <property type="match status" value="1"/>
</dbReference>
<dbReference type="Pfam" id="PF02405">
    <property type="entry name" value="MlaE"/>
    <property type="match status" value="1"/>
</dbReference>
<protein>
    <recommendedName>
        <fullName>Probable ABC transporter permease protein RC0129</fullName>
    </recommendedName>
</protein>
<gene>
    <name type="ordered locus">RC0129</name>
</gene>
<accession>Q92JD8</accession>
<organism>
    <name type="scientific">Rickettsia conorii (strain ATCC VR-613 / Malish 7)</name>
    <dbReference type="NCBI Taxonomy" id="272944"/>
    <lineage>
        <taxon>Bacteria</taxon>
        <taxon>Pseudomonadati</taxon>
        <taxon>Pseudomonadota</taxon>
        <taxon>Alphaproteobacteria</taxon>
        <taxon>Rickettsiales</taxon>
        <taxon>Rickettsiaceae</taxon>
        <taxon>Rickettsieae</taxon>
        <taxon>Rickettsia</taxon>
        <taxon>spotted fever group</taxon>
    </lineage>
</organism>
<evidence type="ECO:0000250" key="1"/>
<evidence type="ECO:0000255" key="2"/>
<evidence type="ECO:0000305" key="3"/>